<accession>P0CG66</accession>
<accession>Q867C2</accession>
<accession>Q867C6</accession>
<reference key="1">
    <citation type="journal article" date="2003" name="J. Mol. Evol.">
        <title>Lineage-specific homogenization of the polyubiquitin gene among human and great apes.</title>
        <authorList>
            <person name="Tachikui H."/>
            <person name="Saitou N."/>
            <person name="Nakajima T."/>
            <person name="Hayasaka I."/>
            <person name="Ishida T."/>
            <person name="Inoue I."/>
        </authorList>
    </citation>
    <scope>NUCLEOTIDE SEQUENCE [GENOMIC DNA]</scope>
</reference>
<protein>
    <recommendedName>
        <fullName>Polyubiquitin-C</fullName>
    </recommendedName>
    <component>
        <recommendedName>
            <fullName>Ubiquitin</fullName>
        </recommendedName>
    </component>
</protein>
<comment type="function">
    <molecule>Ubiquitin</molecule>
    <text evidence="2">Exists either covalently attached to another protein, or free (unanchored). When covalently bound, it is conjugated to target proteins via an isopeptide bond either as a monomer (monoubiquitin), a polymer linked via different Lys residues of the ubiquitin (polyubiquitin chains) or a linear polymer linked via the initiator Met of the ubiquitin (linear polyubiquitin chains). Polyubiquitin chains, when attached to a target protein, have different functions depending on the Lys residue of the ubiquitin that is linked: Lys-6-linked may be involved in DNA repair; Lys-11-linked is involved in ERAD (endoplasmic reticulum-associated degradation) and in cell-cycle regulation; Lys-29-linked is involved in proteotoxic stress response and cell cycle; Lys-33-linked is involved in kinase modification; Lys-48-linked is involved in protein degradation via the proteasome; Lys-63-linked is involved in endocytosis, DNA-damage responses as well as in signaling processes leading to activation of the transcription factor NF-kappa-B. Linear polymer chains formed via attachment by the initiator Met lead to cell signaling. Ubiquitin is usually conjugated to Lys residues of target proteins, however, in rare cases, conjugation to Cys or Ser residues has been observed. When polyubiquitin is free (unanchored-polyubiquitin), it also has distinct roles, such as in activation of protein kinases, and in signaling (By similarity). During ubiquitination, the acceptor ubiquitin is positioned in the active site via direct interaction with the E2 ubiquitin-conjugating enzymes such as UBE2R2 (By similarity). As a monoubiquitin, its C-terminal glycine is recognized as a C-degron by Cul2-RING (CRL2) E3 ubiquitin-protein ligase complexes (By similarity).</text>
</comment>
<comment type="subcellular location">
    <molecule>Ubiquitin</molecule>
    <subcellularLocation>
        <location evidence="1">Cytoplasm</location>
    </subcellularLocation>
    <subcellularLocation>
        <location evidence="1">Nucleus</location>
    </subcellularLocation>
    <subcellularLocation>
        <location evidence="2">Mitochondrion outer membrane</location>
        <topology evidence="2">Peripheral membrane protein</topology>
    </subcellularLocation>
</comment>
<comment type="PTM">
    <molecule>Ubiquitin</molecule>
    <text evidence="2">Phosphorylated at Ser-65 by PINK1 during mitophagy. Phosphorylated ubiquitin specifically binds and activates parkin (PRKN), triggering mitophagy. Phosphorylation does not affect E1-mediated E2 charging of ubiquitin but affects discharging of E2 enzymes to form polyubiquitin chains. It also affects deubiquitination by deubiquitinase enzymes such as USP30.</text>
</comment>
<comment type="PTM">
    <molecule>Ubiquitin</molecule>
    <text evidence="2">Mono-ADP-ribosylated at the C-terminus by PARP9, a component of the PPAR9-DTX3L complex. ADP-ribosylation requires processing by E1 and E2 enzymes and prevents ubiquitin conjugation to substrates such as histones.</text>
</comment>
<comment type="miscellaneous">
    <text>Ubiquitin is encoded by 4 different genes. UBA52 and RPS27A genes code for a single copy of ubiquitin fused to the ribosomal proteins eL40 and eS31, respectively. UBB and UBC genes code for a polyubiquitin precursor with exact head to tail repeats, the number of repeats differ between species and strains.</text>
</comment>
<comment type="miscellaneous">
    <text>For the sake of clarity sequence features are annotated only for the first chain, and are not repeated for each of the following chains.</text>
</comment>
<comment type="similarity">
    <text evidence="4">Belongs to the ubiquitin family.</text>
</comment>
<name>UBC_GORGO</name>
<organism>
    <name type="scientific">Gorilla gorilla gorilla</name>
    <name type="common">Western lowland gorilla</name>
    <dbReference type="NCBI Taxonomy" id="9595"/>
    <lineage>
        <taxon>Eukaryota</taxon>
        <taxon>Metazoa</taxon>
        <taxon>Chordata</taxon>
        <taxon>Craniata</taxon>
        <taxon>Vertebrata</taxon>
        <taxon>Euteleostomi</taxon>
        <taxon>Mammalia</taxon>
        <taxon>Eutheria</taxon>
        <taxon>Euarchontoglires</taxon>
        <taxon>Primates</taxon>
        <taxon>Haplorrhini</taxon>
        <taxon>Catarrhini</taxon>
        <taxon>Hominidae</taxon>
        <taxon>Gorilla</taxon>
    </lineage>
</organism>
<feature type="chain" id="PRO_0000114799" description="Ubiquitin">
    <location>
        <begin position="1"/>
        <end position="76"/>
    </location>
</feature>
<feature type="chain" id="PRO_0000396162" description="Ubiquitin">
    <location>
        <begin position="77"/>
        <end position="152"/>
    </location>
</feature>
<feature type="chain" id="PRO_0000396163" description="Ubiquitin">
    <location>
        <begin position="153"/>
        <end position="228"/>
    </location>
</feature>
<feature type="chain" id="PRO_0000396164" description="Ubiquitin">
    <location>
        <begin position="229"/>
        <end position="304"/>
    </location>
</feature>
<feature type="chain" id="PRO_0000396165" description="Ubiquitin">
    <location>
        <begin position="305"/>
        <end position="380"/>
    </location>
</feature>
<feature type="chain" id="PRO_0000396166" description="Ubiquitin">
    <location>
        <begin position="381"/>
        <end position="456"/>
    </location>
</feature>
<feature type="chain" id="PRO_0000396167" description="Ubiquitin">
    <location>
        <begin position="457"/>
        <end position="532"/>
    </location>
</feature>
<feature type="chain" id="PRO_0000396168" description="Ubiquitin">
    <location>
        <begin position="533"/>
        <end position="608"/>
    </location>
</feature>
<feature type="propeptide" id="PRO_0000396169">
    <location>
        <position position="609"/>
    </location>
</feature>
<feature type="domain" description="Ubiquitin-like 1" evidence="3">
    <location>
        <begin position="1"/>
        <end position="76"/>
    </location>
</feature>
<feature type="domain" description="Ubiquitin-like 2" evidence="3">
    <location>
        <begin position="77"/>
        <end position="152"/>
    </location>
</feature>
<feature type="domain" description="Ubiquitin-like 3" evidence="3">
    <location>
        <begin position="153"/>
        <end position="228"/>
    </location>
</feature>
<feature type="domain" description="Ubiquitin-like 4" evidence="3">
    <location>
        <begin position="229"/>
        <end position="304"/>
    </location>
</feature>
<feature type="domain" description="Ubiquitin-like 5" evidence="3">
    <location>
        <begin position="305"/>
        <end position="380"/>
    </location>
</feature>
<feature type="domain" description="Ubiquitin-like 6" evidence="3">
    <location>
        <begin position="381"/>
        <end position="456"/>
    </location>
</feature>
<feature type="domain" description="Ubiquitin-like 7" evidence="3">
    <location>
        <begin position="457"/>
        <end position="532"/>
    </location>
</feature>
<feature type="domain" description="Ubiquitin-like 8" evidence="3">
    <location>
        <begin position="533"/>
        <end position="608"/>
    </location>
</feature>
<feature type="site" description="Interacts with activating enzyme">
    <location>
        <position position="54"/>
    </location>
</feature>
<feature type="site" description="Essential for function">
    <location>
        <position position="68"/>
    </location>
</feature>
<feature type="site" description="Interacts with activating enzyme">
    <location>
        <position position="72"/>
    </location>
</feature>
<feature type="modified residue" description="Phosphoserine; by PINK1" evidence="2">
    <location>
        <position position="65"/>
    </location>
</feature>
<feature type="modified residue" description="ADP-ribosylglycine" evidence="2">
    <location>
        <position position="76"/>
    </location>
</feature>
<feature type="cross-link" description="Glycyl lysine isopeptide (Lys-Gly) (interchain with G-Cter in ubiquitin)" evidence="2">
    <location>
        <position position="6"/>
    </location>
</feature>
<feature type="cross-link" description="Glycyl lysine isopeptide (Lys-Gly) (interchain with G-Cter in ubiquitin)" evidence="2">
    <location>
        <position position="11"/>
    </location>
</feature>
<feature type="cross-link" description="Glycyl lysine isopeptide (Lys-Gly) (interchain with G-Cter in ubiquitin)" evidence="2">
    <location>
        <position position="27"/>
    </location>
</feature>
<feature type="cross-link" description="Glycyl lysine isopeptide (Lys-Gly) (interchain with G-Cter in ubiquitin)" evidence="2">
    <location>
        <position position="29"/>
    </location>
</feature>
<feature type="cross-link" description="Glycyl lysine isopeptide (Lys-Gly) (interchain with G-Cter in ubiquitin)" evidence="2">
    <location>
        <position position="33"/>
    </location>
</feature>
<feature type="cross-link" description="Glycyl lysine isopeptide (Lys-Gly) (interchain with G-Cter in ubiquitin)" evidence="2">
    <location>
        <position position="48"/>
    </location>
</feature>
<feature type="cross-link" description="Glycyl lysine isopeptide (Lys-Gly) (interchain with G-Cter in ubiquitin)" evidence="2">
    <location>
        <position position="63"/>
    </location>
</feature>
<feature type="cross-link" description="Glycyl lysine isopeptide (Gly-Lys) (interchain with K-? in acceptor proteins)" evidence="3">
    <location>
        <position position="76"/>
    </location>
</feature>
<evidence type="ECO:0000250" key="1"/>
<evidence type="ECO:0000250" key="2">
    <source>
        <dbReference type="UniProtKB" id="P0CG48"/>
    </source>
</evidence>
<evidence type="ECO:0000255" key="3">
    <source>
        <dbReference type="PROSITE-ProRule" id="PRU00214"/>
    </source>
</evidence>
<evidence type="ECO:0000305" key="4"/>
<keyword id="KW-0013">ADP-ribosylation</keyword>
<keyword id="KW-0963">Cytoplasm</keyword>
<keyword id="KW-1017">Isopeptide bond</keyword>
<keyword id="KW-0472">Membrane</keyword>
<keyword id="KW-0496">Mitochondrion</keyword>
<keyword id="KW-1000">Mitochondrion outer membrane</keyword>
<keyword id="KW-0539">Nucleus</keyword>
<keyword id="KW-0597">Phosphoprotein</keyword>
<keyword id="KW-1185">Reference proteome</keyword>
<keyword id="KW-0677">Repeat</keyword>
<keyword id="KW-0832">Ubl conjugation</keyword>
<gene>
    <name type="primary">UBC</name>
</gene>
<proteinExistence type="inferred from homology"/>
<dbReference type="EMBL" id="AB089615">
    <property type="protein sequence ID" value="BAC56953.1"/>
    <property type="molecule type" value="Genomic_DNA"/>
</dbReference>
<dbReference type="RefSeq" id="XP_063550540.1">
    <property type="nucleotide sequence ID" value="XM_063694470.1"/>
</dbReference>
<dbReference type="SMR" id="P0CG66"/>
<dbReference type="FunCoup" id="P0CG66">
    <property type="interactions" value="1808"/>
</dbReference>
<dbReference type="STRING" id="9593.ENSGGOP00000001286"/>
<dbReference type="GeneID" id="101151508"/>
<dbReference type="eggNOG" id="KOG0001">
    <property type="taxonomic scope" value="Eukaryota"/>
</dbReference>
<dbReference type="InParanoid" id="P0CG66"/>
<dbReference type="Proteomes" id="UP000001519">
    <property type="component" value="Unplaced"/>
</dbReference>
<dbReference type="GO" id="GO:0005737">
    <property type="term" value="C:cytoplasm"/>
    <property type="evidence" value="ECO:0000318"/>
    <property type="project" value="GO_Central"/>
</dbReference>
<dbReference type="GO" id="GO:0005741">
    <property type="term" value="C:mitochondrial outer membrane"/>
    <property type="evidence" value="ECO:0007669"/>
    <property type="project" value="UniProtKB-SubCell"/>
</dbReference>
<dbReference type="GO" id="GO:0005634">
    <property type="term" value="C:nucleus"/>
    <property type="evidence" value="ECO:0000318"/>
    <property type="project" value="GO_Central"/>
</dbReference>
<dbReference type="GO" id="GO:0031386">
    <property type="term" value="F:protein tag activity"/>
    <property type="evidence" value="ECO:0000318"/>
    <property type="project" value="GO_Central"/>
</dbReference>
<dbReference type="GO" id="GO:0031625">
    <property type="term" value="F:ubiquitin protein ligase binding"/>
    <property type="evidence" value="ECO:0000318"/>
    <property type="project" value="GO_Central"/>
</dbReference>
<dbReference type="GO" id="GO:0019941">
    <property type="term" value="P:modification-dependent protein catabolic process"/>
    <property type="evidence" value="ECO:0000318"/>
    <property type="project" value="GO_Central"/>
</dbReference>
<dbReference type="GO" id="GO:0016567">
    <property type="term" value="P:protein ubiquitination"/>
    <property type="evidence" value="ECO:0000318"/>
    <property type="project" value="GO_Central"/>
</dbReference>
<dbReference type="CDD" id="cd01803">
    <property type="entry name" value="Ubl_ubiquitin"/>
    <property type="match status" value="8"/>
</dbReference>
<dbReference type="FunFam" id="3.10.20.90:FF:000158">
    <property type="entry name" value="Polyubiquitin 5"/>
    <property type="match status" value="8"/>
</dbReference>
<dbReference type="Gene3D" id="3.10.20.90">
    <property type="entry name" value="Phosphatidylinositol 3-kinase Catalytic Subunit, Chain A, domain 1"/>
    <property type="match status" value="8"/>
</dbReference>
<dbReference type="InterPro" id="IPR000626">
    <property type="entry name" value="Ubiquitin-like_dom"/>
</dbReference>
<dbReference type="InterPro" id="IPR029071">
    <property type="entry name" value="Ubiquitin-like_domsf"/>
</dbReference>
<dbReference type="InterPro" id="IPR019954">
    <property type="entry name" value="Ubiquitin_CS"/>
</dbReference>
<dbReference type="InterPro" id="IPR019956">
    <property type="entry name" value="Ubiquitin_dom"/>
</dbReference>
<dbReference type="InterPro" id="IPR050158">
    <property type="entry name" value="Ubiquitin_ubiquitin-like"/>
</dbReference>
<dbReference type="PANTHER" id="PTHR10666">
    <property type="entry name" value="UBIQUITIN"/>
    <property type="match status" value="1"/>
</dbReference>
<dbReference type="Pfam" id="PF00240">
    <property type="entry name" value="ubiquitin"/>
    <property type="match status" value="8"/>
</dbReference>
<dbReference type="PRINTS" id="PR00348">
    <property type="entry name" value="UBIQUITIN"/>
</dbReference>
<dbReference type="SMART" id="SM00213">
    <property type="entry name" value="UBQ"/>
    <property type="match status" value="8"/>
</dbReference>
<dbReference type="SUPFAM" id="SSF54236">
    <property type="entry name" value="Ubiquitin-like"/>
    <property type="match status" value="8"/>
</dbReference>
<dbReference type="PROSITE" id="PS00299">
    <property type="entry name" value="UBIQUITIN_1"/>
    <property type="match status" value="8"/>
</dbReference>
<dbReference type="PROSITE" id="PS50053">
    <property type="entry name" value="UBIQUITIN_2"/>
    <property type="match status" value="8"/>
</dbReference>
<sequence>MQIFVKTLTGKTITLEVEPSDTIENVKAKIQDKEGIPPDQQRLIFAGKQLEDGRTLSDYNIQKESTLHLVLRLRGGMQIFVKTLTGKTITLEVEPSDTIENVKAKIQDKEGIPPDQQRLIFAGKQLEDGRTLSDYNIQKESTLHLVLRLRGGMQIFVKTLTGKTITLEVEPSDTIENVKAKIQDKEGIPPDQQRLIFAGKQLEDGRTLSDYNIQKESTLHLVLRLRGGMQIFVKTLTGKTITLEVEPSDTIENVKAKIQDKEGIPPDQQRLIFAGKQLEDGRTLSDYNIQKESTLHLVLRLRGGMQIFVKTLTGKTITLEVEPSDTIENVKAKIQDKEGIPPDQQRLIFAGKQLEDGRTLSDYNIQKESTLHLVLRLRGGMQIFVKTLTGKTITLEVEPSDTIENVKAKIQDKEGIPPDQQRLIFAGKQLEDGRTLSDYNIQKESTLHLVLRLRGGMQIFVKTLTGKTITLEVEPSDTIENVKAKIQDKEGIPPDQQRLIFAGKQLEDGRTLSDYNIQKESTLHLVLRLRGGMQIFVKTLTGKTITLEVEPSDTIENVKAKIQDKEGIPPDQQRLIFAGKQLEDGRTLSDYNIQKESTLHLVLRLRGGV</sequence>